<feature type="chain" id="PRO_0000322506" description="A-type ATP synthase subunit B">
    <location>
        <begin position="1"/>
        <end position="471"/>
    </location>
</feature>
<name>AATB_NATPD</name>
<accession>Q3ITC7</accession>
<protein>
    <recommendedName>
        <fullName evidence="1">A-type ATP synthase subunit B</fullName>
    </recommendedName>
</protein>
<proteinExistence type="inferred from homology"/>
<dbReference type="EMBL" id="CR936257">
    <property type="protein sequence ID" value="CAI48607.1"/>
    <property type="molecule type" value="Genomic_DNA"/>
</dbReference>
<dbReference type="RefSeq" id="WP_011322242.1">
    <property type="nucleotide sequence ID" value="NC_007426.1"/>
</dbReference>
<dbReference type="SMR" id="Q3ITC7"/>
<dbReference type="STRING" id="348780.NP_1032A"/>
<dbReference type="EnsemblBacteria" id="CAI48607">
    <property type="protein sequence ID" value="CAI48607"/>
    <property type="gene ID" value="NP_1032A"/>
</dbReference>
<dbReference type="GeneID" id="3702539"/>
<dbReference type="KEGG" id="nph:NP_1032A"/>
<dbReference type="eggNOG" id="arCOG00865">
    <property type="taxonomic scope" value="Archaea"/>
</dbReference>
<dbReference type="HOGENOM" id="CLU_022916_0_0_2"/>
<dbReference type="OrthoDB" id="32941at2157"/>
<dbReference type="Proteomes" id="UP000002698">
    <property type="component" value="Chromosome"/>
</dbReference>
<dbReference type="GO" id="GO:0005886">
    <property type="term" value="C:plasma membrane"/>
    <property type="evidence" value="ECO:0007669"/>
    <property type="project" value="UniProtKB-SubCell"/>
</dbReference>
<dbReference type="GO" id="GO:0033178">
    <property type="term" value="C:proton-transporting two-sector ATPase complex, catalytic domain"/>
    <property type="evidence" value="ECO:0007669"/>
    <property type="project" value="InterPro"/>
</dbReference>
<dbReference type="GO" id="GO:0005524">
    <property type="term" value="F:ATP binding"/>
    <property type="evidence" value="ECO:0007669"/>
    <property type="project" value="UniProtKB-UniRule"/>
</dbReference>
<dbReference type="GO" id="GO:0046933">
    <property type="term" value="F:proton-transporting ATP synthase activity, rotational mechanism"/>
    <property type="evidence" value="ECO:0007669"/>
    <property type="project" value="UniProtKB-UniRule"/>
</dbReference>
<dbReference type="GO" id="GO:0042777">
    <property type="term" value="P:proton motive force-driven plasma membrane ATP synthesis"/>
    <property type="evidence" value="ECO:0007669"/>
    <property type="project" value="UniProtKB-UniRule"/>
</dbReference>
<dbReference type="CDD" id="cd18112">
    <property type="entry name" value="ATP-synt_V_A-type_beta_C"/>
    <property type="match status" value="1"/>
</dbReference>
<dbReference type="CDD" id="cd18118">
    <property type="entry name" value="ATP-synt_V_A-type_beta_N"/>
    <property type="match status" value="1"/>
</dbReference>
<dbReference type="CDD" id="cd01135">
    <property type="entry name" value="V_A-ATPase_B"/>
    <property type="match status" value="1"/>
</dbReference>
<dbReference type="Gene3D" id="3.40.50.12240">
    <property type="match status" value="1"/>
</dbReference>
<dbReference type="HAMAP" id="MF_00310">
    <property type="entry name" value="ATP_synth_B_arch"/>
    <property type="match status" value="1"/>
</dbReference>
<dbReference type="InterPro" id="IPR055190">
    <property type="entry name" value="ATP-synt_VA_C"/>
</dbReference>
<dbReference type="InterPro" id="IPR020003">
    <property type="entry name" value="ATPase_a/bsu_AS"/>
</dbReference>
<dbReference type="InterPro" id="IPR005724">
    <property type="entry name" value="ATPase_A1-cplx_bsu"/>
</dbReference>
<dbReference type="InterPro" id="IPR004100">
    <property type="entry name" value="ATPase_F1/V1/A1_a/bsu_N"/>
</dbReference>
<dbReference type="InterPro" id="IPR000194">
    <property type="entry name" value="ATPase_F1/V1/A1_a/bsu_nucl-bd"/>
</dbReference>
<dbReference type="InterPro" id="IPR027417">
    <property type="entry name" value="P-loop_NTPase"/>
</dbReference>
<dbReference type="InterPro" id="IPR022879">
    <property type="entry name" value="V-ATPase_su_B/beta"/>
</dbReference>
<dbReference type="NCBIfam" id="TIGR01041">
    <property type="entry name" value="ATP_syn_B_arch"/>
    <property type="match status" value="1"/>
</dbReference>
<dbReference type="NCBIfam" id="NF003235">
    <property type="entry name" value="PRK04196.1"/>
    <property type="match status" value="1"/>
</dbReference>
<dbReference type="PANTHER" id="PTHR43389">
    <property type="entry name" value="V-TYPE PROTON ATPASE SUBUNIT B"/>
    <property type="match status" value="1"/>
</dbReference>
<dbReference type="PANTHER" id="PTHR43389:SF4">
    <property type="entry name" value="V-TYPE PROTON ATPASE SUBUNIT B"/>
    <property type="match status" value="1"/>
</dbReference>
<dbReference type="Pfam" id="PF00006">
    <property type="entry name" value="ATP-synt_ab"/>
    <property type="match status" value="1"/>
</dbReference>
<dbReference type="Pfam" id="PF02874">
    <property type="entry name" value="ATP-synt_ab_N"/>
    <property type="match status" value="1"/>
</dbReference>
<dbReference type="Pfam" id="PF22919">
    <property type="entry name" value="ATP-synt_VA_C"/>
    <property type="match status" value="1"/>
</dbReference>
<dbReference type="PIRSF" id="PIRSF039114">
    <property type="entry name" value="V-ATPsynth_beta/V-ATPase_B"/>
    <property type="match status" value="1"/>
</dbReference>
<dbReference type="SUPFAM" id="SSF47917">
    <property type="entry name" value="C-terminal domain of alpha and beta subunits of F1 ATP synthase"/>
    <property type="match status" value="1"/>
</dbReference>
<dbReference type="SUPFAM" id="SSF52540">
    <property type="entry name" value="P-loop containing nucleoside triphosphate hydrolases"/>
    <property type="match status" value="1"/>
</dbReference>
<dbReference type="PROSITE" id="PS00152">
    <property type="entry name" value="ATPASE_ALPHA_BETA"/>
    <property type="match status" value="1"/>
</dbReference>
<keyword id="KW-0066">ATP synthesis</keyword>
<keyword id="KW-1003">Cell membrane</keyword>
<keyword id="KW-0375">Hydrogen ion transport</keyword>
<keyword id="KW-0406">Ion transport</keyword>
<keyword id="KW-0472">Membrane</keyword>
<keyword id="KW-1185">Reference proteome</keyword>
<keyword id="KW-0813">Transport</keyword>
<sequence>MQKEYKTITEISGPLVFAEVDEPVGYDEMVEIETPSGETRRGQVLESTSEFVAIQVFEGTSGIDRNSSVRFLGETLQMPLTEELLGRVLSGSGEPIDGGPEIEPDEEREIVGAAINPTAREYPEEFIQTGVSAIDGMNTLIRGQKLPIFSGSGLPHNELALQIARQASVPEEESGDDEAGSEFAVIFGAMGITQEEANEFMDDFERTGALERSVVFMNLADDPAVERTVTPRMALTTAEYLAFEEGYHVLVILTDMTNYCEALREIGAAREEVPGRRGYPGYMYTDLAQLYERAGRIEGREGSVTQIPILTMPGDDDTHPIPDLTGYITEGQIYIDRNLNSQGIEPPINVLPSLSRLMDDGIGEGFTREDHPDVSDQAYAAYAEGEDLRDLVNIVGREALSERDNKYLDFADRFEEEFVQQGYDTNRDVEETLDLAWELLSDLPKEELNRIDEEAIEEYYVEDEQAAQTAD</sequence>
<reference key="1">
    <citation type="journal article" date="2005" name="Genome Res.">
        <title>Living with two extremes: conclusions from the genome sequence of Natronomonas pharaonis.</title>
        <authorList>
            <person name="Falb M."/>
            <person name="Pfeiffer F."/>
            <person name="Palm P."/>
            <person name="Rodewald K."/>
            <person name="Hickmann V."/>
            <person name="Tittor J."/>
            <person name="Oesterhelt D."/>
        </authorList>
    </citation>
    <scope>NUCLEOTIDE SEQUENCE [LARGE SCALE GENOMIC DNA]</scope>
    <source>
        <strain>ATCC 35678 / DSM 2160 / CIP 103997 / JCM 8858 / NBRC 14720 / NCIMB 2260 / Gabara</strain>
    </source>
</reference>
<comment type="function">
    <text evidence="1">Component of the A-type ATP synthase that produces ATP from ADP in the presence of a proton gradient across the membrane. The B chain is a regulatory subunit.</text>
</comment>
<comment type="subunit">
    <text evidence="1">Has multiple subunits with at least A(3), B(3), C, D, E, F, H, I and proteolipid K(x).</text>
</comment>
<comment type="subcellular location">
    <subcellularLocation>
        <location evidence="1">Cell membrane</location>
        <topology evidence="1">Peripheral membrane protein</topology>
    </subcellularLocation>
</comment>
<comment type="similarity">
    <text evidence="1">Belongs to the ATPase alpha/beta chains family.</text>
</comment>
<organism>
    <name type="scientific">Natronomonas pharaonis (strain ATCC 35678 / DSM 2160 / CIP 103997 / JCM 8858 / NBRC 14720 / NCIMB 2260 / Gabara)</name>
    <name type="common">Halobacterium pharaonis</name>
    <dbReference type="NCBI Taxonomy" id="348780"/>
    <lineage>
        <taxon>Archaea</taxon>
        <taxon>Methanobacteriati</taxon>
        <taxon>Methanobacteriota</taxon>
        <taxon>Stenosarchaea group</taxon>
        <taxon>Halobacteria</taxon>
        <taxon>Halobacteriales</taxon>
        <taxon>Haloarculaceae</taxon>
        <taxon>Natronomonas</taxon>
    </lineage>
</organism>
<gene>
    <name evidence="1" type="primary">atpB</name>
    <name type="ordered locus">NP_1032A</name>
</gene>
<evidence type="ECO:0000255" key="1">
    <source>
        <dbReference type="HAMAP-Rule" id="MF_00310"/>
    </source>
</evidence>